<accession>Q8XCQ7</accession>
<keyword id="KW-0002">3D-structure</keyword>
<keyword id="KW-0963">Cytoplasm</keyword>
<keyword id="KW-0274">FAD</keyword>
<keyword id="KW-0285">Flavoprotein</keyword>
<keyword id="KW-0489">Methyltransferase</keyword>
<keyword id="KW-0511">Multifunctional enzyme</keyword>
<keyword id="KW-0560">Oxidoreductase</keyword>
<keyword id="KW-1185">Reference proteome</keyword>
<keyword id="KW-0949">S-adenosyl-L-methionine</keyword>
<keyword id="KW-0808">Transferase</keyword>
<keyword id="KW-0819">tRNA processing</keyword>
<protein>
    <recommendedName>
        <fullName evidence="1">tRNA 5-methylaminomethyl-2-thiouridine biosynthesis bifunctional protein MnmC</fullName>
        <shortName evidence="1">tRNA mnm(5)s(2)U biosynthesis bifunctional protein</shortName>
    </recommendedName>
    <domain>
        <recommendedName>
            <fullName evidence="1">tRNA (mnm(5)s(2)U34)-methyltransferase</fullName>
            <ecNumber evidence="1">2.1.1.61</ecNumber>
        </recommendedName>
    </domain>
    <domain>
        <recommendedName>
            <fullName evidence="1">FAD-dependent cmnm(5)s(2)U34 oxidoreductase</fullName>
            <ecNumber evidence="1">1.5.-.-</ecNumber>
        </recommendedName>
    </domain>
</protein>
<feature type="chain" id="PRO_0000095014" description="tRNA 5-methylaminomethyl-2-thiouridine biosynthesis bifunctional protein MnmC">
    <location>
        <begin position="1"/>
        <end position="668"/>
    </location>
</feature>
<feature type="region of interest" description="tRNA (mnm(5)s(2)U34)-methyltransferase">
    <location>
        <begin position="1"/>
        <end position="245"/>
    </location>
</feature>
<feature type="region of interest" description="FAD-dependent cmnm(5)s(2)U34 oxidoreductase">
    <location>
        <begin position="270"/>
        <end position="668"/>
    </location>
</feature>
<feature type="turn" evidence="3">
    <location>
        <begin position="2"/>
        <end position="5"/>
    </location>
</feature>
<feature type="strand" evidence="3">
    <location>
        <begin position="11"/>
        <end position="13"/>
    </location>
</feature>
<feature type="strand" evidence="3">
    <location>
        <begin position="19"/>
        <end position="21"/>
    </location>
</feature>
<feature type="turn" evidence="3">
    <location>
        <begin position="22"/>
        <end position="25"/>
    </location>
</feature>
<feature type="strand" evidence="3">
    <location>
        <begin position="26"/>
        <end position="29"/>
    </location>
</feature>
<feature type="turn" evidence="3">
    <location>
        <begin position="31"/>
        <end position="33"/>
    </location>
</feature>
<feature type="helix" evidence="3">
    <location>
        <begin position="34"/>
        <end position="45"/>
    </location>
</feature>
<feature type="helix" evidence="3">
    <location>
        <begin position="48"/>
        <end position="51"/>
    </location>
</feature>
<feature type="helix" evidence="3">
    <location>
        <begin position="52"/>
        <end position="54"/>
    </location>
</feature>
<feature type="strand" evidence="3">
    <location>
        <begin position="56"/>
        <end position="65"/>
    </location>
</feature>
<feature type="helix" evidence="3">
    <location>
        <begin position="71"/>
        <end position="86"/>
    </location>
</feature>
<feature type="strand" evidence="3">
    <location>
        <begin position="94"/>
        <end position="103"/>
    </location>
</feature>
<feature type="helix" evidence="3">
    <location>
        <begin position="107"/>
        <end position="114"/>
    </location>
</feature>
<feature type="helix" evidence="3">
    <location>
        <begin position="118"/>
        <end position="120"/>
    </location>
</feature>
<feature type="helix" evidence="3">
    <location>
        <begin position="121"/>
        <end position="129"/>
    </location>
</feature>
<feature type="strand" evidence="3">
    <location>
        <begin position="136"/>
        <end position="143"/>
    </location>
</feature>
<feature type="strand" evidence="3">
    <location>
        <begin position="148"/>
        <end position="155"/>
    </location>
</feature>
<feature type="helix" evidence="3">
    <location>
        <begin position="157"/>
        <end position="160"/>
    </location>
</feature>
<feature type="helix" evidence="3">
    <location>
        <begin position="161"/>
        <end position="163"/>
    </location>
</feature>
<feature type="helix" evidence="3">
    <location>
        <begin position="166"/>
        <end position="168"/>
    </location>
</feature>
<feature type="strand" evidence="3">
    <location>
        <begin position="172"/>
        <end position="177"/>
    </location>
</feature>
<feature type="turn" evidence="3">
    <location>
        <begin position="182"/>
        <end position="184"/>
    </location>
</feature>
<feature type="helix" evidence="3">
    <location>
        <begin position="186"/>
        <end position="188"/>
    </location>
</feature>
<feature type="helix" evidence="3">
    <location>
        <begin position="191"/>
        <end position="200"/>
    </location>
</feature>
<feature type="strand" evidence="3">
    <location>
        <begin position="201"/>
        <end position="210"/>
    </location>
</feature>
<feature type="helix" evidence="3">
    <location>
        <begin position="214"/>
        <end position="223"/>
    </location>
</feature>
<feature type="strand" evidence="3">
    <location>
        <begin position="225"/>
        <end position="230"/>
    </location>
</feature>
<feature type="strand" evidence="3">
    <location>
        <begin position="239"/>
        <end position="244"/>
    </location>
</feature>
<comment type="function">
    <text evidence="1">Catalyzes the last two steps in the biosynthesis of 5-methylaminomethyl-2-thiouridine (mnm(5)s(2)U) at the wobble position (U34) in tRNA. Catalyzes the FAD-dependent demodification of cmnm(5)s(2)U34 to nm(5)s(2)U34, followed by the transfer of a methyl group from S-adenosyl-L-methionine to nm(5)s(2)U34, to form mnm(5)s(2)U34.</text>
</comment>
<comment type="catalytic activity">
    <reaction evidence="1">
        <text>5-aminomethyl-2-thiouridine(34) in tRNA + S-adenosyl-L-methionine = 5-methylaminomethyl-2-thiouridine(34) in tRNA + S-adenosyl-L-homocysteine + H(+)</text>
        <dbReference type="Rhea" id="RHEA:19569"/>
        <dbReference type="Rhea" id="RHEA-COMP:10195"/>
        <dbReference type="Rhea" id="RHEA-COMP:10197"/>
        <dbReference type="ChEBI" id="CHEBI:15378"/>
        <dbReference type="ChEBI" id="CHEBI:57856"/>
        <dbReference type="ChEBI" id="CHEBI:59789"/>
        <dbReference type="ChEBI" id="CHEBI:74454"/>
        <dbReference type="ChEBI" id="CHEBI:74455"/>
        <dbReference type="EC" id="2.1.1.61"/>
    </reaction>
</comment>
<comment type="cofactor">
    <cofactor evidence="1">
        <name>FAD</name>
        <dbReference type="ChEBI" id="CHEBI:57692"/>
    </cofactor>
</comment>
<comment type="subcellular location">
    <subcellularLocation>
        <location evidence="1">Cytoplasm</location>
    </subcellularLocation>
</comment>
<comment type="similarity">
    <text evidence="1">In the N-terminal section; belongs to the methyltransferase superfamily. tRNA (mnm(5)s(2)U34)-methyltransferase family.</text>
</comment>
<comment type="similarity">
    <text evidence="1">In the C-terminal section; belongs to the DAO family.</text>
</comment>
<comment type="sequence caution" evidence="2">
    <conflict type="erroneous initiation">
        <sequence resource="EMBL-CDS" id="AAG57453"/>
    </conflict>
    <text>Extended N-terminus.</text>
</comment>
<gene>
    <name evidence="1" type="primary">mnmC</name>
    <name type="ordered locus">Z3587</name>
    <name type="ordered locus">ECs3208</name>
</gene>
<organism>
    <name type="scientific">Escherichia coli O157:H7</name>
    <dbReference type="NCBI Taxonomy" id="83334"/>
    <lineage>
        <taxon>Bacteria</taxon>
        <taxon>Pseudomonadati</taxon>
        <taxon>Pseudomonadota</taxon>
        <taxon>Gammaproteobacteria</taxon>
        <taxon>Enterobacterales</taxon>
        <taxon>Enterobacteriaceae</taxon>
        <taxon>Escherichia</taxon>
    </lineage>
</organism>
<dbReference type="EC" id="2.1.1.61" evidence="1"/>
<dbReference type="EC" id="1.5.-.-" evidence="1"/>
<dbReference type="EMBL" id="AE005174">
    <property type="protein sequence ID" value="AAG57453.1"/>
    <property type="status" value="ALT_INIT"/>
    <property type="molecule type" value="Genomic_DNA"/>
</dbReference>
<dbReference type="EMBL" id="BA000007">
    <property type="protein sequence ID" value="BAB36631.2"/>
    <property type="molecule type" value="Genomic_DNA"/>
</dbReference>
<dbReference type="PIR" id="A85874">
    <property type="entry name" value="A85874"/>
</dbReference>
<dbReference type="PIR" id="H91029">
    <property type="entry name" value="H91029"/>
</dbReference>
<dbReference type="RefSeq" id="NP_311235.2">
    <property type="nucleotide sequence ID" value="NC_002695.1"/>
</dbReference>
<dbReference type="RefSeq" id="WP_000683769.1">
    <property type="nucleotide sequence ID" value="NZ_VOAI01000001.1"/>
</dbReference>
<dbReference type="PDB" id="2QY6">
    <property type="method" value="X-ray"/>
    <property type="resolution" value="2.00 A"/>
    <property type="chains" value="A/B=2-247"/>
</dbReference>
<dbReference type="PDBsum" id="2QY6"/>
<dbReference type="SMR" id="Q8XCQ7"/>
<dbReference type="STRING" id="155864.Z3587"/>
<dbReference type="DNASU" id="913957"/>
<dbReference type="GeneID" id="913957"/>
<dbReference type="KEGG" id="ece:Z3587"/>
<dbReference type="KEGG" id="ecs:ECs_3208"/>
<dbReference type="PATRIC" id="fig|386585.9.peg.3349"/>
<dbReference type="eggNOG" id="COG0665">
    <property type="taxonomic scope" value="Bacteria"/>
</dbReference>
<dbReference type="eggNOG" id="COG4121">
    <property type="taxonomic scope" value="Bacteria"/>
</dbReference>
<dbReference type="HOGENOM" id="CLU_022427_1_0_6"/>
<dbReference type="OMA" id="NFLCAWQ"/>
<dbReference type="EvolutionaryTrace" id="Q8XCQ7"/>
<dbReference type="Proteomes" id="UP000000558">
    <property type="component" value="Chromosome"/>
</dbReference>
<dbReference type="Proteomes" id="UP000002519">
    <property type="component" value="Chromosome"/>
</dbReference>
<dbReference type="GO" id="GO:0005737">
    <property type="term" value="C:cytoplasm"/>
    <property type="evidence" value="ECO:0007669"/>
    <property type="project" value="UniProtKB-SubCell"/>
</dbReference>
<dbReference type="GO" id="GO:0050660">
    <property type="term" value="F:flavin adenine dinucleotide binding"/>
    <property type="evidence" value="ECO:0007669"/>
    <property type="project" value="UniProtKB-UniRule"/>
</dbReference>
<dbReference type="GO" id="GO:0016645">
    <property type="term" value="F:oxidoreductase activity, acting on the CH-NH group of donors"/>
    <property type="evidence" value="ECO:0007669"/>
    <property type="project" value="InterPro"/>
</dbReference>
<dbReference type="GO" id="GO:0004808">
    <property type="term" value="F:tRNA (5-methylaminomethyl-2-thiouridylate)(34)-methyltransferase activity"/>
    <property type="evidence" value="ECO:0007669"/>
    <property type="project" value="UniProtKB-EC"/>
</dbReference>
<dbReference type="GO" id="GO:0032259">
    <property type="term" value="P:methylation"/>
    <property type="evidence" value="ECO:0007669"/>
    <property type="project" value="UniProtKB-KW"/>
</dbReference>
<dbReference type="GO" id="GO:0002098">
    <property type="term" value="P:tRNA wobble uridine modification"/>
    <property type="evidence" value="ECO:0007669"/>
    <property type="project" value="TreeGrafter"/>
</dbReference>
<dbReference type="FunFam" id="3.40.50.150:FF:000107">
    <property type="entry name" value="tRNA 5-methylaminomethyl-2-thiouridine biosynthesis bifunctional protein MnmC"/>
    <property type="match status" value="1"/>
</dbReference>
<dbReference type="Gene3D" id="3.30.9.10">
    <property type="entry name" value="D-Amino Acid Oxidase, subunit A, domain 2"/>
    <property type="match status" value="1"/>
</dbReference>
<dbReference type="Gene3D" id="3.50.50.60">
    <property type="entry name" value="FAD/NAD(P)-binding domain"/>
    <property type="match status" value="1"/>
</dbReference>
<dbReference type="Gene3D" id="3.40.50.150">
    <property type="entry name" value="Vaccinia Virus protein VP39"/>
    <property type="match status" value="1"/>
</dbReference>
<dbReference type="HAMAP" id="MF_01102">
    <property type="entry name" value="MnmC"/>
    <property type="match status" value="1"/>
</dbReference>
<dbReference type="InterPro" id="IPR006076">
    <property type="entry name" value="FAD-dep_OxRdtase"/>
</dbReference>
<dbReference type="InterPro" id="IPR036188">
    <property type="entry name" value="FAD/NAD-bd_sf"/>
</dbReference>
<dbReference type="InterPro" id="IPR008471">
    <property type="entry name" value="MnmC-like_methylTransf"/>
</dbReference>
<dbReference type="InterPro" id="IPR029063">
    <property type="entry name" value="SAM-dependent_MTases_sf"/>
</dbReference>
<dbReference type="InterPro" id="IPR023032">
    <property type="entry name" value="tRNA_MAMT_biosynth_bifunc_MnmC"/>
</dbReference>
<dbReference type="InterPro" id="IPR047785">
    <property type="entry name" value="tRNA_MNMC2"/>
</dbReference>
<dbReference type="InterPro" id="IPR017610">
    <property type="entry name" value="tRNA_S-uridine_synth_MnmC_C"/>
</dbReference>
<dbReference type="NCBIfam" id="TIGR03197">
    <property type="entry name" value="MnmC_Cterm"/>
    <property type="match status" value="1"/>
</dbReference>
<dbReference type="NCBIfam" id="NF002480">
    <property type="entry name" value="PRK01747.1-1"/>
    <property type="match status" value="1"/>
</dbReference>
<dbReference type="NCBIfam" id="NF002481">
    <property type="entry name" value="PRK01747.1-2"/>
    <property type="match status" value="1"/>
</dbReference>
<dbReference type="NCBIfam" id="NF002482">
    <property type="entry name" value="PRK01747.1-3"/>
    <property type="match status" value="1"/>
</dbReference>
<dbReference type="NCBIfam" id="NF002484">
    <property type="entry name" value="PRK01747.1-5"/>
    <property type="match status" value="1"/>
</dbReference>
<dbReference type="NCBIfam" id="NF033855">
    <property type="entry name" value="tRNA_MNMC2"/>
    <property type="match status" value="1"/>
</dbReference>
<dbReference type="PANTHER" id="PTHR13847">
    <property type="entry name" value="SARCOSINE DEHYDROGENASE-RELATED"/>
    <property type="match status" value="1"/>
</dbReference>
<dbReference type="PANTHER" id="PTHR13847:SF283">
    <property type="entry name" value="TRNA 5-METHYLAMINOMETHYL-2-THIOURIDINE BIOSYNTHESIS BIFUNCTIONAL PROTEIN MNMC"/>
    <property type="match status" value="1"/>
</dbReference>
<dbReference type="Pfam" id="PF01266">
    <property type="entry name" value="DAO"/>
    <property type="match status" value="1"/>
</dbReference>
<dbReference type="Pfam" id="PF05430">
    <property type="entry name" value="Methyltransf_30"/>
    <property type="match status" value="1"/>
</dbReference>
<dbReference type="SUPFAM" id="SSF51905">
    <property type="entry name" value="FAD/NAD(P)-binding domain"/>
    <property type="match status" value="1"/>
</dbReference>
<dbReference type="SUPFAM" id="SSF53335">
    <property type="entry name" value="S-adenosyl-L-methionine-dependent methyltransferases"/>
    <property type="match status" value="1"/>
</dbReference>
<name>MNMC_ECO57</name>
<reference key="1">
    <citation type="journal article" date="2001" name="Nature">
        <title>Genome sequence of enterohaemorrhagic Escherichia coli O157:H7.</title>
        <authorList>
            <person name="Perna N.T."/>
            <person name="Plunkett G. III"/>
            <person name="Burland V."/>
            <person name="Mau B."/>
            <person name="Glasner J.D."/>
            <person name="Rose D.J."/>
            <person name="Mayhew G.F."/>
            <person name="Evans P.S."/>
            <person name="Gregor J."/>
            <person name="Kirkpatrick H.A."/>
            <person name="Posfai G."/>
            <person name="Hackett J."/>
            <person name="Klink S."/>
            <person name="Boutin A."/>
            <person name="Shao Y."/>
            <person name="Miller L."/>
            <person name="Grotbeck E.J."/>
            <person name="Davis N.W."/>
            <person name="Lim A."/>
            <person name="Dimalanta E.T."/>
            <person name="Potamousis K."/>
            <person name="Apodaca J."/>
            <person name="Anantharaman T.S."/>
            <person name="Lin J."/>
            <person name="Yen G."/>
            <person name="Schwartz D.C."/>
            <person name="Welch R.A."/>
            <person name="Blattner F.R."/>
        </authorList>
    </citation>
    <scope>NUCLEOTIDE SEQUENCE [LARGE SCALE GENOMIC DNA]</scope>
    <source>
        <strain>O157:H7 / EDL933 / ATCC 700927 / EHEC</strain>
    </source>
</reference>
<reference key="2">
    <citation type="journal article" date="2001" name="DNA Res.">
        <title>Complete genome sequence of enterohemorrhagic Escherichia coli O157:H7 and genomic comparison with a laboratory strain K-12.</title>
        <authorList>
            <person name="Hayashi T."/>
            <person name="Makino K."/>
            <person name="Ohnishi M."/>
            <person name="Kurokawa K."/>
            <person name="Ishii K."/>
            <person name="Yokoyama K."/>
            <person name="Han C.-G."/>
            <person name="Ohtsubo E."/>
            <person name="Nakayama K."/>
            <person name="Murata T."/>
            <person name="Tanaka M."/>
            <person name="Tobe T."/>
            <person name="Iida T."/>
            <person name="Takami H."/>
            <person name="Honda T."/>
            <person name="Sasakawa C."/>
            <person name="Ogasawara N."/>
            <person name="Yasunaga T."/>
            <person name="Kuhara S."/>
            <person name="Shiba T."/>
            <person name="Hattori M."/>
            <person name="Shinagawa H."/>
        </authorList>
    </citation>
    <scope>NUCLEOTIDE SEQUENCE [LARGE SCALE GENOMIC DNA]</scope>
    <source>
        <strain>O157:H7 / Sakai / RIMD 0509952 / EHEC</strain>
    </source>
</reference>
<reference key="3">
    <citation type="submission" date="2007-08" db="PDB data bank">
        <title>Crystal structure of the N-terminal domain of UPF0209 protein yfcK from Escherichia coli O157:H7.</title>
        <authorList>
            <consortium name="New York structural genomix research consortium (NYSGXRC)"/>
        </authorList>
    </citation>
    <scope>X-RAY CRYSTALLOGRAPHY (2.0 ANGSTROMS) OF 1-247</scope>
</reference>
<sequence>MKHYSIQPANLEFNAEGTPVSRDFDDVYFSNDNGLEETRYVFLGGNQLEARFPEHPHPLFVVAESGFGTGLNFLTLWQAFDQFREAHPQAQLQRLHFISFEKFPLTRADLALAHQHWPELAPWAEQLQAQWPMPLPGCHRLLLDEGRVTLDLWFGDINELISQLDDSLNQKVDAWFLDGFAPAKNPDMWTQNLFNAMARLARPGGTLATFTSAGFVRRGLQEAGFTMQKRKGFGRKREMLCGVMEQTLPLPCSTPWFNRTGSSKREVAIIGGGIASALLSLALLRRGWQVTLYCADEAPALGASGNRQGALYPLLSKHDEALNRFFSNGFTFARRLYDSLPVKFDHDWCGVTQLGWDEKSQHKIAQMLSMDLPEELAVAVEANAVEQITGVTTNCSGITYPQGGWLCPAELTRNVLELAQQQGLQIYYQYQLQDLSRKDDCWLLTFAGDQQATHSVVVLANGHQISRFSQTSSLPVYSVAGQVSHIPTTPELAKLKQVLCYDGYLTPQNPANQHHCIGASYHRGSEETAYSEDNQQQNRQRLIDCFPHAQWAKTVDVSKKEARCGVRCATRDHLPMVGNVPDYEATLVEYASLAEQKDKAVSAPVFDDLFMFAALGSRGLCSAPLCAEILAAQMSDEPIPMDASTLAALNPNRLWVRKLLKGKAVKAG</sequence>
<evidence type="ECO:0000255" key="1">
    <source>
        <dbReference type="HAMAP-Rule" id="MF_01102"/>
    </source>
</evidence>
<evidence type="ECO:0000305" key="2"/>
<evidence type="ECO:0007829" key="3">
    <source>
        <dbReference type="PDB" id="2QY6"/>
    </source>
</evidence>
<proteinExistence type="evidence at protein level"/>